<accession>A3D2B1</accession>
<organism>
    <name type="scientific">Shewanella baltica (strain OS155 / ATCC BAA-1091)</name>
    <dbReference type="NCBI Taxonomy" id="325240"/>
    <lineage>
        <taxon>Bacteria</taxon>
        <taxon>Pseudomonadati</taxon>
        <taxon>Pseudomonadota</taxon>
        <taxon>Gammaproteobacteria</taxon>
        <taxon>Alteromonadales</taxon>
        <taxon>Shewanellaceae</taxon>
        <taxon>Shewanella</taxon>
    </lineage>
</organism>
<evidence type="ECO:0000255" key="1">
    <source>
        <dbReference type="HAMAP-Rule" id="MF_01151"/>
    </source>
</evidence>
<gene>
    <name evidence="1" type="primary">grpE</name>
    <name type="ordered locus">Sbal_1356</name>
</gene>
<name>GRPE_SHEB5</name>
<feature type="chain" id="PRO_1000137616" description="Protein GrpE">
    <location>
        <begin position="1"/>
        <end position="206"/>
    </location>
</feature>
<protein>
    <recommendedName>
        <fullName evidence="1">Protein GrpE</fullName>
    </recommendedName>
    <alternativeName>
        <fullName evidence="1">HSP-70 cofactor</fullName>
    </alternativeName>
</protein>
<proteinExistence type="inferred from homology"/>
<comment type="function">
    <text evidence="1">Participates actively in the response to hyperosmotic and heat shock by preventing the aggregation of stress-denatured proteins, in association with DnaK and GrpE. It is the nucleotide exchange factor for DnaK and may function as a thermosensor. Unfolded proteins bind initially to DnaJ; upon interaction with the DnaJ-bound protein, DnaK hydrolyzes its bound ATP, resulting in the formation of a stable complex. GrpE releases ADP from DnaK; ATP binding to DnaK triggers the release of the substrate protein, thus completing the reaction cycle. Several rounds of ATP-dependent interactions between DnaJ, DnaK and GrpE are required for fully efficient folding.</text>
</comment>
<comment type="subunit">
    <text evidence="1">Homodimer.</text>
</comment>
<comment type="subcellular location">
    <subcellularLocation>
        <location evidence="1">Cytoplasm</location>
    </subcellularLocation>
</comment>
<comment type="similarity">
    <text evidence="1">Belongs to the GrpE family.</text>
</comment>
<sequence>MSNESIKAEQDLIQEGVESEVSTAEASLIDELTQANFRIEELEQLLAEALAKVEEQKDSVIRAAAEVDNIRRRAAMDVEKANKFALEKFANELLPVLDNMERALMGTNPEDEATKSIYQGVELTQKSLLTAVAKFGVKQIDPQGQSFNPDQHQAIGMQPSAEFPANTVMLVMQKGYELNSRLLRPAMVMVSQGGPNQESATIDIEA</sequence>
<reference key="1">
    <citation type="submission" date="2007-02" db="EMBL/GenBank/DDBJ databases">
        <title>Complete sequence of chromosome of Shewanella baltica OS155.</title>
        <authorList>
            <consortium name="US DOE Joint Genome Institute"/>
            <person name="Copeland A."/>
            <person name="Lucas S."/>
            <person name="Lapidus A."/>
            <person name="Barry K."/>
            <person name="Detter J.C."/>
            <person name="Glavina del Rio T."/>
            <person name="Hammon N."/>
            <person name="Israni S."/>
            <person name="Dalin E."/>
            <person name="Tice H."/>
            <person name="Pitluck S."/>
            <person name="Sims D.R."/>
            <person name="Brettin T."/>
            <person name="Bruce D."/>
            <person name="Han C."/>
            <person name="Tapia R."/>
            <person name="Brainard J."/>
            <person name="Schmutz J."/>
            <person name="Larimer F."/>
            <person name="Land M."/>
            <person name="Hauser L."/>
            <person name="Kyrpides N."/>
            <person name="Mikhailova N."/>
            <person name="Brettar I."/>
            <person name="Klappenbach J."/>
            <person name="Konstantinidis K."/>
            <person name="Rodrigues J."/>
            <person name="Tiedje J."/>
            <person name="Richardson P."/>
        </authorList>
    </citation>
    <scope>NUCLEOTIDE SEQUENCE [LARGE SCALE GENOMIC DNA]</scope>
    <source>
        <strain>OS155 / ATCC BAA-1091</strain>
    </source>
</reference>
<keyword id="KW-0143">Chaperone</keyword>
<keyword id="KW-0963">Cytoplasm</keyword>
<keyword id="KW-1185">Reference proteome</keyword>
<keyword id="KW-0346">Stress response</keyword>
<dbReference type="EMBL" id="CP000563">
    <property type="protein sequence ID" value="ABN60874.1"/>
    <property type="molecule type" value="Genomic_DNA"/>
</dbReference>
<dbReference type="RefSeq" id="WP_006080881.1">
    <property type="nucleotide sequence ID" value="NC_009052.1"/>
</dbReference>
<dbReference type="SMR" id="A3D2B1"/>
<dbReference type="STRING" id="325240.Sbal_1356"/>
<dbReference type="GeneID" id="11771635"/>
<dbReference type="KEGG" id="sbl:Sbal_1356"/>
<dbReference type="HOGENOM" id="CLU_057217_6_0_6"/>
<dbReference type="OrthoDB" id="9789811at2"/>
<dbReference type="Proteomes" id="UP000001557">
    <property type="component" value="Chromosome"/>
</dbReference>
<dbReference type="GO" id="GO:0005829">
    <property type="term" value="C:cytosol"/>
    <property type="evidence" value="ECO:0007669"/>
    <property type="project" value="TreeGrafter"/>
</dbReference>
<dbReference type="GO" id="GO:0000774">
    <property type="term" value="F:adenyl-nucleotide exchange factor activity"/>
    <property type="evidence" value="ECO:0007669"/>
    <property type="project" value="InterPro"/>
</dbReference>
<dbReference type="GO" id="GO:0042803">
    <property type="term" value="F:protein homodimerization activity"/>
    <property type="evidence" value="ECO:0007669"/>
    <property type="project" value="InterPro"/>
</dbReference>
<dbReference type="GO" id="GO:0051087">
    <property type="term" value="F:protein-folding chaperone binding"/>
    <property type="evidence" value="ECO:0007669"/>
    <property type="project" value="InterPro"/>
</dbReference>
<dbReference type="GO" id="GO:0051082">
    <property type="term" value="F:unfolded protein binding"/>
    <property type="evidence" value="ECO:0007669"/>
    <property type="project" value="TreeGrafter"/>
</dbReference>
<dbReference type="GO" id="GO:0006457">
    <property type="term" value="P:protein folding"/>
    <property type="evidence" value="ECO:0007669"/>
    <property type="project" value="InterPro"/>
</dbReference>
<dbReference type="CDD" id="cd00446">
    <property type="entry name" value="GrpE"/>
    <property type="match status" value="1"/>
</dbReference>
<dbReference type="FunFam" id="2.30.22.10:FF:000001">
    <property type="entry name" value="Protein GrpE"/>
    <property type="match status" value="1"/>
</dbReference>
<dbReference type="Gene3D" id="3.90.20.20">
    <property type="match status" value="1"/>
</dbReference>
<dbReference type="Gene3D" id="2.30.22.10">
    <property type="entry name" value="Head domain of nucleotide exchange factor GrpE"/>
    <property type="match status" value="1"/>
</dbReference>
<dbReference type="HAMAP" id="MF_01151">
    <property type="entry name" value="GrpE"/>
    <property type="match status" value="1"/>
</dbReference>
<dbReference type="InterPro" id="IPR000740">
    <property type="entry name" value="GrpE"/>
</dbReference>
<dbReference type="InterPro" id="IPR013805">
    <property type="entry name" value="GrpE_coiled_coil"/>
</dbReference>
<dbReference type="InterPro" id="IPR009012">
    <property type="entry name" value="GrpE_head"/>
</dbReference>
<dbReference type="NCBIfam" id="NF010737">
    <property type="entry name" value="PRK14139.1"/>
    <property type="match status" value="1"/>
</dbReference>
<dbReference type="NCBIfam" id="NF010738">
    <property type="entry name" value="PRK14140.1"/>
    <property type="match status" value="1"/>
</dbReference>
<dbReference type="NCBIfam" id="NF010748">
    <property type="entry name" value="PRK14150.1"/>
    <property type="match status" value="1"/>
</dbReference>
<dbReference type="PANTHER" id="PTHR21237">
    <property type="entry name" value="GRPE PROTEIN"/>
    <property type="match status" value="1"/>
</dbReference>
<dbReference type="PANTHER" id="PTHR21237:SF23">
    <property type="entry name" value="GRPE PROTEIN HOMOLOG, MITOCHONDRIAL"/>
    <property type="match status" value="1"/>
</dbReference>
<dbReference type="Pfam" id="PF01025">
    <property type="entry name" value="GrpE"/>
    <property type="match status" value="1"/>
</dbReference>
<dbReference type="PRINTS" id="PR00773">
    <property type="entry name" value="GRPEPROTEIN"/>
</dbReference>
<dbReference type="SUPFAM" id="SSF58014">
    <property type="entry name" value="Coiled-coil domain of nucleotide exchange factor GrpE"/>
    <property type="match status" value="1"/>
</dbReference>
<dbReference type="SUPFAM" id="SSF51064">
    <property type="entry name" value="Head domain of nucleotide exchange factor GrpE"/>
    <property type="match status" value="1"/>
</dbReference>
<dbReference type="PROSITE" id="PS01071">
    <property type="entry name" value="GRPE"/>
    <property type="match status" value="1"/>
</dbReference>